<feature type="chain" id="PRO_0000109388" description="Pyridoxal 5'-phosphate synthase subunit PdxS">
    <location>
        <begin position="1"/>
        <end position="297"/>
    </location>
</feature>
<feature type="active site" description="Schiff-base intermediate with D-ribose 5-phosphate" evidence="1">
    <location>
        <position position="84"/>
    </location>
</feature>
<feature type="binding site" evidence="1">
    <location>
        <position position="27"/>
    </location>
    <ligand>
        <name>D-ribose 5-phosphate</name>
        <dbReference type="ChEBI" id="CHEBI:78346"/>
    </ligand>
</feature>
<feature type="binding site" evidence="1">
    <location>
        <position position="156"/>
    </location>
    <ligand>
        <name>D-ribose 5-phosphate</name>
        <dbReference type="ChEBI" id="CHEBI:78346"/>
    </ligand>
</feature>
<feature type="binding site" evidence="1">
    <location>
        <position position="168"/>
    </location>
    <ligand>
        <name>D-glyceraldehyde 3-phosphate</name>
        <dbReference type="ChEBI" id="CHEBI:59776"/>
    </ligand>
</feature>
<feature type="binding site" evidence="1">
    <location>
        <position position="217"/>
    </location>
    <ligand>
        <name>D-ribose 5-phosphate</name>
        <dbReference type="ChEBI" id="CHEBI:78346"/>
    </ligand>
</feature>
<feature type="binding site" evidence="1">
    <location>
        <begin position="238"/>
        <end position="239"/>
    </location>
    <ligand>
        <name>D-ribose 5-phosphate</name>
        <dbReference type="ChEBI" id="CHEBI:78346"/>
    </ligand>
</feature>
<protein>
    <recommendedName>
        <fullName evidence="1">Pyridoxal 5'-phosphate synthase subunit PdxS</fullName>
        <shortName evidence="1">PLP synthase subunit PdxS</shortName>
        <ecNumber evidence="1">4.3.3.6</ecNumber>
    </recommendedName>
    <alternativeName>
        <fullName evidence="1">Pdx1</fullName>
    </alternativeName>
</protein>
<reference key="1">
    <citation type="journal article" date="2003" name="Nucleic Acids Res.">
        <title>The complete genome sequence and analysis of Corynebacterium diphtheriae NCTC13129.</title>
        <authorList>
            <person name="Cerdeno-Tarraga A.-M."/>
            <person name="Efstratiou A."/>
            <person name="Dover L.G."/>
            <person name="Holden M.T.G."/>
            <person name="Pallen M.J."/>
            <person name="Bentley S.D."/>
            <person name="Besra G.S."/>
            <person name="Churcher C.M."/>
            <person name="James K.D."/>
            <person name="De Zoysa A."/>
            <person name="Chillingworth T."/>
            <person name="Cronin A."/>
            <person name="Dowd L."/>
            <person name="Feltwell T."/>
            <person name="Hamlin N."/>
            <person name="Holroyd S."/>
            <person name="Jagels K."/>
            <person name="Moule S."/>
            <person name="Quail M.A."/>
            <person name="Rabbinowitsch E."/>
            <person name="Rutherford K.M."/>
            <person name="Thomson N.R."/>
            <person name="Unwin L."/>
            <person name="Whitehead S."/>
            <person name="Barrell B.G."/>
            <person name="Parkhill J."/>
        </authorList>
    </citation>
    <scope>NUCLEOTIDE SEQUENCE [LARGE SCALE GENOMIC DNA]</scope>
    <source>
        <strain>ATCC 700971 / NCTC 13129 / Biotype gravis</strain>
    </source>
</reference>
<sequence length="297" mass="31340">MTQETFTATTRVKRGLADMLKGGVIMDVVTPEQARIAEDAGASAVMALERVPADIRAQGGVARMSDPDLIEGIVNAVSIPVMAKARIGHFVEAQILESLGVDFIDESEVLSPADYVNHIDKWNFDVPFVCGATNLGEALRRITEGAAMIRSKGEAGTGDVSEAVKHLRTIRGEINRLRSMDEDQLYVAAKEIQAPYDLVREVAATGKLPVTLFVAGGVATPADAALVMQMGAEGVFVGSGIFKSGNPAARAAAIVKATTMYDDPAAIAEVSRGLGEAMVGINVADVPAPHRLAERGW</sequence>
<accession>P60800</accession>
<dbReference type="EC" id="4.3.3.6" evidence="1"/>
<dbReference type="EMBL" id="BX248354">
    <property type="protein sequence ID" value="CAE48733.1"/>
    <property type="molecule type" value="Genomic_DNA"/>
</dbReference>
<dbReference type="RefSeq" id="WP_003850286.1">
    <property type="nucleotide sequence ID" value="NC_002935.2"/>
</dbReference>
<dbReference type="SMR" id="P60800"/>
<dbReference type="STRING" id="257309.DIP0227"/>
<dbReference type="KEGG" id="cdi:DIP0227"/>
<dbReference type="HOGENOM" id="CLU_055352_1_0_11"/>
<dbReference type="UniPathway" id="UPA00245"/>
<dbReference type="Proteomes" id="UP000002198">
    <property type="component" value="Chromosome"/>
</dbReference>
<dbReference type="GO" id="GO:0036381">
    <property type="term" value="F:pyridoxal 5'-phosphate synthase (glutamine hydrolysing) activity"/>
    <property type="evidence" value="ECO:0007669"/>
    <property type="project" value="UniProtKB-UniRule"/>
</dbReference>
<dbReference type="GO" id="GO:0006520">
    <property type="term" value="P:amino acid metabolic process"/>
    <property type="evidence" value="ECO:0007669"/>
    <property type="project" value="TreeGrafter"/>
</dbReference>
<dbReference type="GO" id="GO:0042823">
    <property type="term" value="P:pyridoxal phosphate biosynthetic process"/>
    <property type="evidence" value="ECO:0007669"/>
    <property type="project" value="UniProtKB-UniRule"/>
</dbReference>
<dbReference type="GO" id="GO:0008615">
    <property type="term" value="P:pyridoxine biosynthetic process"/>
    <property type="evidence" value="ECO:0007669"/>
    <property type="project" value="TreeGrafter"/>
</dbReference>
<dbReference type="CDD" id="cd04727">
    <property type="entry name" value="pdxS"/>
    <property type="match status" value="1"/>
</dbReference>
<dbReference type="FunFam" id="3.20.20.70:FF:000001">
    <property type="entry name" value="Pyridoxine biosynthesis protein PDX1"/>
    <property type="match status" value="1"/>
</dbReference>
<dbReference type="Gene3D" id="3.20.20.70">
    <property type="entry name" value="Aldolase class I"/>
    <property type="match status" value="1"/>
</dbReference>
<dbReference type="HAMAP" id="MF_01824">
    <property type="entry name" value="PdxS"/>
    <property type="match status" value="1"/>
</dbReference>
<dbReference type="InterPro" id="IPR013785">
    <property type="entry name" value="Aldolase_TIM"/>
</dbReference>
<dbReference type="InterPro" id="IPR001852">
    <property type="entry name" value="PdxS/SNZ"/>
</dbReference>
<dbReference type="InterPro" id="IPR033755">
    <property type="entry name" value="PdxS/SNZ_N"/>
</dbReference>
<dbReference type="InterPro" id="IPR011060">
    <property type="entry name" value="RibuloseP-bd_barrel"/>
</dbReference>
<dbReference type="NCBIfam" id="NF003215">
    <property type="entry name" value="PRK04180.1"/>
    <property type="match status" value="1"/>
</dbReference>
<dbReference type="NCBIfam" id="TIGR00343">
    <property type="entry name" value="pyridoxal 5'-phosphate synthase lyase subunit PdxS"/>
    <property type="match status" value="1"/>
</dbReference>
<dbReference type="PANTHER" id="PTHR31829">
    <property type="entry name" value="PYRIDOXAL 5'-PHOSPHATE SYNTHASE SUBUNIT SNZ1-RELATED"/>
    <property type="match status" value="1"/>
</dbReference>
<dbReference type="PANTHER" id="PTHR31829:SF0">
    <property type="entry name" value="PYRIDOXAL 5'-PHOSPHATE SYNTHASE SUBUNIT SNZ1-RELATED"/>
    <property type="match status" value="1"/>
</dbReference>
<dbReference type="Pfam" id="PF01680">
    <property type="entry name" value="SOR_SNZ"/>
    <property type="match status" value="1"/>
</dbReference>
<dbReference type="PIRSF" id="PIRSF029271">
    <property type="entry name" value="Pdx1"/>
    <property type="match status" value="1"/>
</dbReference>
<dbReference type="SUPFAM" id="SSF51366">
    <property type="entry name" value="Ribulose-phoshate binding barrel"/>
    <property type="match status" value="1"/>
</dbReference>
<dbReference type="PROSITE" id="PS01235">
    <property type="entry name" value="PDXS_SNZ_1"/>
    <property type="match status" value="1"/>
</dbReference>
<dbReference type="PROSITE" id="PS51129">
    <property type="entry name" value="PDXS_SNZ_2"/>
    <property type="match status" value="1"/>
</dbReference>
<proteinExistence type="inferred from homology"/>
<comment type="function">
    <text evidence="1">Catalyzes the formation of pyridoxal 5'-phosphate from ribose 5-phosphate (RBP), glyceraldehyde 3-phosphate (G3P) and ammonia. The ammonia is provided by the PdxT subunit. Can also use ribulose 5-phosphate and dihydroxyacetone phosphate as substrates, resulting from enzyme-catalyzed isomerization of RBP and G3P, respectively.</text>
</comment>
<comment type="catalytic activity">
    <reaction evidence="1">
        <text>aldehydo-D-ribose 5-phosphate + D-glyceraldehyde 3-phosphate + L-glutamine = pyridoxal 5'-phosphate + L-glutamate + phosphate + 3 H2O + H(+)</text>
        <dbReference type="Rhea" id="RHEA:31507"/>
        <dbReference type="ChEBI" id="CHEBI:15377"/>
        <dbReference type="ChEBI" id="CHEBI:15378"/>
        <dbReference type="ChEBI" id="CHEBI:29985"/>
        <dbReference type="ChEBI" id="CHEBI:43474"/>
        <dbReference type="ChEBI" id="CHEBI:58273"/>
        <dbReference type="ChEBI" id="CHEBI:58359"/>
        <dbReference type="ChEBI" id="CHEBI:59776"/>
        <dbReference type="ChEBI" id="CHEBI:597326"/>
        <dbReference type="EC" id="4.3.3.6"/>
    </reaction>
</comment>
<comment type="pathway">
    <text evidence="1">Cofactor biosynthesis; pyridoxal 5'-phosphate biosynthesis.</text>
</comment>
<comment type="subunit">
    <text evidence="1">In the presence of PdxT, forms a dodecamer of heterodimers.</text>
</comment>
<comment type="similarity">
    <text evidence="1">Belongs to the PdxS/SNZ family.</text>
</comment>
<name>PDXS_CORDI</name>
<evidence type="ECO:0000255" key="1">
    <source>
        <dbReference type="HAMAP-Rule" id="MF_01824"/>
    </source>
</evidence>
<organism>
    <name type="scientific">Corynebacterium diphtheriae (strain ATCC 700971 / NCTC 13129 / Biotype gravis)</name>
    <dbReference type="NCBI Taxonomy" id="257309"/>
    <lineage>
        <taxon>Bacteria</taxon>
        <taxon>Bacillati</taxon>
        <taxon>Actinomycetota</taxon>
        <taxon>Actinomycetes</taxon>
        <taxon>Mycobacteriales</taxon>
        <taxon>Corynebacteriaceae</taxon>
        <taxon>Corynebacterium</taxon>
    </lineage>
</organism>
<keyword id="KW-0456">Lyase</keyword>
<keyword id="KW-0663">Pyridoxal phosphate</keyword>
<keyword id="KW-1185">Reference proteome</keyword>
<keyword id="KW-0704">Schiff base</keyword>
<gene>
    <name evidence="1" type="primary">pdxS</name>
    <name type="ordered locus">DIP0227</name>
</gene>